<gene>
    <name evidence="8" type="primary">Acer2</name>
    <name type="synonym">Asah3l</name>
</gene>
<protein>
    <recommendedName>
        <fullName evidence="7">Alkaline ceramidase 2</fullName>
        <shortName>AlkCDase 2</shortName>
        <shortName>Alkaline CDase 2</shortName>
        <shortName>maCER2</shortName>
        <ecNumber evidence="4">3.5.1.-</ecNumber>
        <ecNumber evidence="4">3.5.1.23</ecNumber>
    </recommendedName>
    <alternativeName>
        <fullName>Acylsphingosine deacylase 3-like</fullName>
    </alternativeName>
    <alternativeName>
        <fullName>Cancer-related gene liver 1 protein</fullName>
        <shortName>CRG-L1</shortName>
    </alternativeName>
    <alternativeName>
        <fullName>N-acylsphingosine amidohydrolase 3-like</fullName>
    </alternativeName>
</protein>
<name>ACER2_MOUSE</name>
<keyword id="KW-0025">Alternative splicing</keyword>
<keyword id="KW-0106">Calcium</keyword>
<keyword id="KW-0325">Glycoprotein</keyword>
<keyword id="KW-0333">Golgi apparatus</keyword>
<keyword id="KW-0378">Hydrolase</keyword>
<keyword id="KW-0443">Lipid metabolism</keyword>
<keyword id="KW-0472">Membrane</keyword>
<keyword id="KW-0479">Metal-binding</keyword>
<keyword id="KW-1185">Reference proteome</keyword>
<keyword id="KW-0746">Sphingolipid metabolism</keyword>
<keyword id="KW-0812">Transmembrane</keyword>
<keyword id="KW-1133">Transmembrane helix</keyword>
<keyword id="KW-0862">Zinc</keyword>
<proteinExistence type="evidence at protein level"/>
<evidence type="ECO:0000250" key="1">
    <source>
        <dbReference type="UniProtKB" id="Q5QJU3"/>
    </source>
</evidence>
<evidence type="ECO:0000250" key="2">
    <source>
        <dbReference type="UniProtKB" id="Q9NUN7"/>
    </source>
</evidence>
<evidence type="ECO:0000255" key="3"/>
<evidence type="ECO:0000269" key="4">
    <source>
    </source>
</evidence>
<evidence type="ECO:0000303" key="5">
    <source>
    </source>
</evidence>
<evidence type="ECO:0000303" key="6">
    <source>
    </source>
</evidence>
<evidence type="ECO:0000305" key="7"/>
<evidence type="ECO:0000312" key="8">
    <source>
        <dbReference type="MGI" id="MGI:1920932"/>
    </source>
</evidence>
<organism>
    <name type="scientific">Mus musculus</name>
    <name type="common">Mouse</name>
    <dbReference type="NCBI Taxonomy" id="10090"/>
    <lineage>
        <taxon>Eukaryota</taxon>
        <taxon>Metazoa</taxon>
        <taxon>Chordata</taxon>
        <taxon>Craniata</taxon>
        <taxon>Vertebrata</taxon>
        <taxon>Euteleostomi</taxon>
        <taxon>Mammalia</taxon>
        <taxon>Eutheria</taxon>
        <taxon>Euarchontoglires</taxon>
        <taxon>Glires</taxon>
        <taxon>Rodentia</taxon>
        <taxon>Myomorpha</taxon>
        <taxon>Muroidea</taxon>
        <taxon>Muridae</taxon>
        <taxon>Murinae</taxon>
        <taxon>Mus</taxon>
        <taxon>Mus</taxon>
    </lineage>
</organism>
<comment type="function">
    <text evidence="1 4 6">Golgi ceramidase that catalyzes the hydrolysis of ceramides into sphingoid bases like sphingosine and free fatty acids at alkaline pH (PubMed:29401619). Ceramides, sphingosine, and its phosphorylated form sphingosine-1-phosphate are bioactive lipids that mediate cellular signaling pathways regulating several biological processes including cell proliferation, apoptosis and differentiation (PubMed:29401619). Has a better catalytic efficiency towards unsaturated long-chain ceramides, including C18:1-, C20:1- and C24:1-ceramides (By similarity) (PubMed:29401619). Saturated long-chain ceramides and unsaturated very long-chain ceramides are also good substrates, whereas saturated very long-chain ceramides and short-chain ceramides are poor substrates. Also hydrolyzes dihydroceramides to produce dihydrosphingosine (By similarity). It is the ceramidase that controls the levels of circulating sphingosine-1-phosphate and dihydrosphingosine-1-phosphate in plasma through their production by hematopoietic cells (PubMed:29401619). Regulates cell proliferation, autophagy and apoptosis by the production of sphingosine and sphingosine-1-phosphate. As part of a p53/TP53-dependent pathway, promotes for instance autophagy and apoptosis in response to DNA damage. Through the production of sphingosine, may also regulate the function of the Golgi complex and regulate the glycosylation of proteins (By similarity).</text>
</comment>
<comment type="catalytic activity">
    <reaction evidence="4">
        <text>an N-acylsphing-4-enine + H2O = sphing-4-enine + a fatty acid</text>
        <dbReference type="Rhea" id="RHEA:20856"/>
        <dbReference type="ChEBI" id="CHEBI:15377"/>
        <dbReference type="ChEBI" id="CHEBI:28868"/>
        <dbReference type="ChEBI" id="CHEBI:52639"/>
        <dbReference type="ChEBI" id="CHEBI:57756"/>
        <dbReference type="EC" id="3.5.1.23"/>
    </reaction>
    <physiologicalReaction direction="left-to-right" evidence="4">
        <dbReference type="Rhea" id="RHEA:20857"/>
    </physiologicalReaction>
</comment>
<comment type="catalytic activity">
    <reaction evidence="1">
        <text>N-(15Z-tetracosenoyl)-sphing-4-enine + H2O = (15Z)-tetracosenoate + sphing-4-enine</text>
        <dbReference type="Rhea" id="RHEA:41267"/>
        <dbReference type="ChEBI" id="CHEBI:15377"/>
        <dbReference type="ChEBI" id="CHEBI:32392"/>
        <dbReference type="ChEBI" id="CHEBI:57756"/>
        <dbReference type="ChEBI" id="CHEBI:74450"/>
    </reaction>
    <physiologicalReaction direction="left-to-right" evidence="1">
        <dbReference type="Rhea" id="RHEA:41268"/>
    </physiologicalReaction>
</comment>
<comment type="catalytic activity">
    <reaction evidence="1">
        <text>N-eicosanoyl-sphing-4-enine + H2O = eicosanoate + sphing-4-enine</text>
        <dbReference type="Rhea" id="RHEA:41275"/>
        <dbReference type="ChEBI" id="CHEBI:15377"/>
        <dbReference type="ChEBI" id="CHEBI:32360"/>
        <dbReference type="ChEBI" id="CHEBI:57756"/>
        <dbReference type="ChEBI" id="CHEBI:72962"/>
    </reaction>
    <physiologicalReaction direction="left-to-right" evidence="1">
        <dbReference type="Rhea" id="RHEA:41276"/>
    </physiologicalReaction>
</comment>
<comment type="catalytic activity">
    <reaction evidence="1">
        <text>N-octadecanoylsphing-4-enine + H2O = sphing-4-enine + octadecanoate</text>
        <dbReference type="Rhea" id="RHEA:41279"/>
        <dbReference type="ChEBI" id="CHEBI:15377"/>
        <dbReference type="ChEBI" id="CHEBI:25629"/>
        <dbReference type="ChEBI" id="CHEBI:57756"/>
        <dbReference type="ChEBI" id="CHEBI:72961"/>
    </reaction>
    <physiologicalReaction direction="left-to-right" evidence="1">
        <dbReference type="Rhea" id="RHEA:41280"/>
    </physiologicalReaction>
</comment>
<comment type="catalytic activity">
    <reaction evidence="1">
        <text>N-hexadecanoylsphing-4-enine + H2O = sphing-4-enine + hexadecanoate</text>
        <dbReference type="Rhea" id="RHEA:38891"/>
        <dbReference type="ChEBI" id="CHEBI:7896"/>
        <dbReference type="ChEBI" id="CHEBI:15377"/>
        <dbReference type="ChEBI" id="CHEBI:57756"/>
        <dbReference type="ChEBI" id="CHEBI:72959"/>
    </reaction>
    <physiologicalReaction direction="left-to-right" evidence="1">
        <dbReference type="Rhea" id="RHEA:38892"/>
    </physiologicalReaction>
</comment>
<comment type="catalytic activity">
    <reaction evidence="1">
        <text>N-tetradecanoylsphing-4-enine + H2O = tetradecanoate + sphing-4-enine</text>
        <dbReference type="Rhea" id="RHEA:41287"/>
        <dbReference type="ChEBI" id="CHEBI:15377"/>
        <dbReference type="ChEBI" id="CHEBI:30807"/>
        <dbReference type="ChEBI" id="CHEBI:57756"/>
        <dbReference type="ChEBI" id="CHEBI:72957"/>
    </reaction>
    <physiologicalReaction direction="left-to-right" evidence="1">
        <dbReference type="Rhea" id="RHEA:41288"/>
    </physiologicalReaction>
</comment>
<comment type="catalytic activity">
    <reaction evidence="1">
        <text>N-dodecanoylsphing-4-enine + H2O = dodecanoate + sphing-4-enine</text>
        <dbReference type="Rhea" id="RHEA:41291"/>
        <dbReference type="ChEBI" id="CHEBI:15377"/>
        <dbReference type="ChEBI" id="CHEBI:18262"/>
        <dbReference type="ChEBI" id="CHEBI:57756"/>
        <dbReference type="ChEBI" id="CHEBI:72956"/>
    </reaction>
    <physiologicalReaction direction="left-to-right" evidence="1">
        <dbReference type="Rhea" id="RHEA:41292"/>
    </physiologicalReaction>
</comment>
<comment type="catalytic activity">
    <reaction evidence="1">
        <text>N-tetracosanoyl-sphing-4-enine + H2O = tetracosanoate + sphing-4-enine</text>
        <dbReference type="Rhea" id="RHEA:41283"/>
        <dbReference type="ChEBI" id="CHEBI:15377"/>
        <dbReference type="ChEBI" id="CHEBI:31014"/>
        <dbReference type="ChEBI" id="CHEBI:57756"/>
        <dbReference type="ChEBI" id="CHEBI:72965"/>
    </reaction>
    <physiologicalReaction direction="left-to-right" evidence="1">
        <dbReference type="Rhea" id="RHEA:41284"/>
    </physiologicalReaction>
</comment>
<comment type="catalytic activity">
    <reaction evidence="1">
        <text>N-(hexanoyl)sphing-4-enine + H2O = hexanoate + sphing-4-enine</text>
        <dbReference type="Rhea" id="RHEA:41295"/>
        <dbReference type="ChEBI" id="CHEBI:15377"/>
        <dbReference type="ChEBI" id="CHEBI:17120"/>
        <dbReference type="ChEBI" id="CHEBI:57756"/>
        <dbReference type="ChEBI" id="CHEBI:63867"/>
    </reaction>
    <physiologicalReaction direction="left-to-right" evidence="1">
        <dbReference type="Rhea" id="RHEA:41296"/>
    </physiologicalReaction>
</comment>
<comment type="catalytic activity">
    <reaction evidence="1">
        <text>N-(9Z-octadecenoyl)-sphing-4-enine + H2O = sphing-4-enine + (9Z)-octadecenoate</text>
        <dbReference type="Rhea" id="RHEA:41299"/>
        <dbReference type="ChEBI" id="CHEBI:15377"/>
        <dbReference type="ChEBI" id="CHEBI:30823"/>
        <dbReference type="ChEBI" id="CHEBI:57756"/>
        <dbReference type="ChEBI" id="CHEBI:77996"/>
    </reaction>
    <physiologicalReaction direction="left-to-right" evidence="1">
        <dbReference type="Rhea" id="RHEA:41300"/>
    </physiologicalReaction>
</comment>
<comment type="catalytic activity">
    <reaction evidence="4">
        <text>an N-acylsphinganine + H2O = sphinganine + a fatty acid</text>
        <dbReference type="Rhea" id="RHEA:33551"/>
        <dbReference type="ChEBI" id="CHEBI:15377"/>
        <dbReference type="ChEBI" id="CHEBI:28868"/>
        <dbReference type="ChEBI" id="CHEBI:31488"/>
        <dbReference type="ChEBI" id="CHEBI:57817"/>
    </reaction>
    <physiologicalReaction direction="left-to-right" evidence="4">
        <dbReference type="Rhea" id="RHEA:33552"/>
    </physiologicalReaction>
</comment>
<comment type="cofactor">
    <cofactor evidence="2">
        <name>Zn(2+)</name>
        <dbReference type="ChEBI" id="CHEBI:29105"/>
    </cofactor>
</comment>
<comment type="pathway">
    <text evidence="4">Lipid metabolism; sphingolipid metabolism.</text>
</comment>
<comment type="subcellular location">
    <subcellularLocation>
        <location evidence="1">Golgi apparatus membrane</location>
        <topology evidence="1">Multi-pass membrane protein</topology>
    </subcellularLocation>
</comment>
<comment type="alternative products">
    <event type="alternative splicing"/>
    <isoform>
        <id>Q8VD53-1</id>
        <name>1</name>
        <sequence type="displayed"/>
    </isoform>
    <isoform>
        <id>Q8VD53-2</id>
        <name>2</name>
        <sequence type="described" ref="VSP_020036"/>
    </isoform>
</comment>
<comment type="tissue specificity">
    <text evidence="4">Widely expressed with higher expression in lung.</text>
</comment>
<comment type="disruption phenotype">
    <text evidence="4">Homozygous knockout mice display no overt phenotype (PubMed:29401619). Reduced levels of sphingosine, dihydrosphingosine, sphingosine-1-phosphate and dihydrosphingosine -1-phosphate are observed in plasma, erythrocytes and platelets (PubMed:29401619).</text>
</comment>
<comment type="similarity">
    <text evidence="7">Belongs to the alkaline ceramidase family.</text>
</comment>
<comment type="sequence caution" evidence="7">
    <conflict type="miscellaneous discrepancy">
        <sequence resource="EMBL-CDS" id="BAC39416"/>
    </conflict>
    <text>Chimera.</text>
</comment>
<dbReference type="EC" id="3.5.1.-" evidence="4"/>
<dbReference type="EC" id="3.5.1.23" evidence="4"/>
<dbReference type="EMBL" id="AF282864">
    <property type="protein sequence ID" value="AAL40408.1"/>
    <property type="molecule type" value="mRNA"/>
</dbReference>
<dbReference type="EMBL" id="AY312515">
    <property type="protein sequence ID" value="AAQ85131.1"/>
    <property type="molecule type" value="mRNA"/>
</dbReference>
<dbReference type="EMBL" id="BC059819">
    <property type="protein sequence ID" value="AAH59819.1"/>
    <property type="molecule type" value="mRNA"/>
</dbReference>
<dbReference type="EMBL" id="AK085306">
    <property type="protein sequence ID" value="BAC39416.1"/>
    <property type="status" value="ALT_SEQ"/>
    <property type="molecule type" value="mRNA"/>
</dbReference>
<dbReference type="CCDS" id="CCDS18311.1">
    <molecule id="Q8VD53-1"/>
</dbReference>
<dbReference type="CCDS" id="CCDS71417.1">
    <molecule id="Q8VD53-2"/>
</dbReference>
<dbReference type="RefSeq" id="NP_001277470.1">
    <molecule id="Q8VD53-2"/>
    <property type="nucleotide sequence ID" value="NM_001290541.1"/>
</dbReference>
<dbReference type="RefSeq" id="NP_001277472.1">
    <property type="nucleotide sequence ID" value="NM_001290543.1"/>
</dbReference>
<dbReference type="RefSeq" id="NP_647467.1">
    <molecule id="Q8VD53-1"/>
    <property type="nucleotide sequence ID" value="NM_139306.3"/>
</dbReference>
<dbReference type="SMR" id="Q8VD53"/>
<dbReference type="FunCoup" id="Q8VD53">
    <property type="interactions" value="969"/>
</dbReference>
<dbReference type="STRING" id="10090.ENSMUSP00000040048"/>
<dbReference type="GlyCosmos" id="Q8VD53">
    <property type="glycosylation" value="1 site, No reported glycans"/>
</dbReference>
<dbReference type="GlyGen" id="Q8VD53">
    <property type="glycosylation" value="1 site"/>
</dbReference>
<dbReference type="PaxDb" id="10090-ENSMUSP00000040048"/>
<dbReference type="ProteomicsDB" id="285538">
    <molecule id="Q8VD53-1"/>
</dbReference>
<dbReference type="ProteomicsDB" id="285539">
    <molecule id="Q8VD53-2"/>
</dbReference>
<dbReference type="Antibodypedia" id="2873">
    <property type="antibodies" value="66 antibodies from 21 providers"/>
</dbReference>
<dbReference type="Ensembl" id="ENSMUST00000045224.14">
    <molecule id="Q8VD53-1"/>
    <property type="protein sequence ID" value="ENSMUSP00000040048.8"/>
    <property type="gene ID" value="ENSMUSG00000038007.15"/>
</dbReference>
<dbReference type="Ensembl" id="ENSMUST00000084433.5">
    <molecule id="Q8VD53-2"/>
    <property type="protein sequence ID" value="ENSMUSP00000081473.5"/>
    <property type="gene ID" value="ENSMUSG00000038007.15"/>
</dbReference>
<dbReference type="GeneID" id="230379"/>
<dbReference type="KEGG" id="mmu:230379"/>
<dbReference type="UCSC" id="uc008tmf.3">
    <molecule id="Q8VD53-1"/>
    <property type="organism name" value="mouse"/>
</dbReference>
<dbReference type="UCSC" id="uc012dgs.2">
    <molecule id="Q8VD53-2"/>
    <property type="organism name" value="mouse"/>
</dbReference>
<dbReference type="AGR" id="MGI:1920932"/>
<dbReference type="CTD" id="340485"/>
<dbReference type="MGI" id="MGI:1920932">
    <property type="gene designation" value="Acer2"/>
</dbReference>
<dbReference type="VEuPathDB" id="HostDB:ENSMUSG00000038007"/>
<dbReference type="eggNOG" id="KOG2329">
    <property type="taxonomic scope" value="Eukaryota"/>
</dbReference>
<dbReference type="GeneTree" id="ENSGT00730000110920"/>
<dbReference type="HOGENOM" id="CLU_088280_0_0_1"/>
<dbReference type="InParanoid" id="Q8VD53"/>
<dbReference type="OMA" id="FWHILIF"/>
<dbReference type="OrthoDB" id="187171at2759"/>
<dbReference type="PhylomeDB" id="Q8VD53"/>
<dbReference type="TreeFam" id="TF313019"/>
<dbReference type="BRENDA" id="3.5.1.23">
    <property type="organism ID" value="3474"/>
</dbReference>
<dbReference type="Reactome" id="R-MMU-9845614">
    <property type="pathway name" value="Sphingolipid catabolism"/>
</dbReference>
<dbReference type="UniPathway" id="UPA00222"/>
<dbReference type="BioGRID-ORCS" id="230379">
    <property type="hits" value="2 hits in 79 CRISPR screens"/>
</dbReference>
<dbReference type="ChiTaRS" id="Acer2">
    <property type="organism name" value="mouse"/>
</dbReference>
<dbReference type="PRO" id="PR:Q8VD53"/>
<dbReference type="Proteomes" id="UP000000589">
    <property type="component" value="Chromosome 4"/>
</dbReference>
<dbReference type="RNAct" id="Q8VD53">
    <property type="molecule type" value="protein"/>
</dbReference>
<dbReference type="Bgee" id="ENSMUSG00000038007">
    <property type="expression patterns" value="Expressed in urinary bladder urothelium and 216 other cell types or tissues"/>
</dbReference>
<dbReference type="GO" id="GO:0000139">
    <property type="term" value="C:Golgi membrane"/>
    <property type="evidence" value="ECO:0000250"/>
    <property type="project" value="UniProtKB"/>
</dbReference>
<dbReference type="GO" id="GO:0046872">
    <property type="term" value="F:metal ion binding"/>
    <property type="evidence" value="ECO:0007669"/>
    <property type="project" value="UniProtKB-KW"/>
</dbReference>
<dbReference type="GO" id="GO:0017040">
    <property type="term" value="F:N-acylsphingosine amidohydrolase activity"/>
    <property type="evidence" value="ECO:0000315"/>
    <property type="project" value="UniProtKB"/>
</dbReference>
<dbReference type="GO" id="GO:0071466">
    <property type="term" value="P:cellular response to xenobiotic stimulus"/>
    <property type="evidence" value="ECO:0007669"/>
    <property type="project" value="Ensembl"/>
</dbReference>
<dbReference type="GO" id="GO:0046514">
    <property type="term" value="P:ceramide catabolic process"/>
    <property type="evidence" value="ECO:0000250"/>
    <property type="project" value="UniProtKB"/>
</dbReference>
<dbReference type="GO" id="GO:0006974">
    <property type="term" value="P:DNA damage response"/>
    <property type="evidence" value="ECO:0000250"/>
    <property type="project" value="UniProtKB"/>
</dbReference>
<dbReference type="GO" id="GO:0030330">
    <property type="term" value="P:DNA damage response, signal transduction by p53 class mediator"/>
    <property type="evidence" value="ECO:0000250"/>
    <property type="project" value="UniProtKB"/>
</dbReference>
<dbReference type="GO" id="GO:0033629">
    <property type="term" value="P:negative regulation of cell adhesion mediated by integrin"/>
    <property type="evidence" value="ECO:0007669"/>
    <property type="project" value="Ensembl"/>
</dbReference>
<dbReference type="GO" id="GO:0001953">
    <property type="term" value="P:negative regulation of cell-matrix adhesion"/>
    <property type="evidence" value="ECO:0007669"/>
    <property type="project" value="Ensembl"/>
</dbReference>
<dbReference type="GO" id="GO:0008284">
    <property type="term" value="P:positive regulation of cell population proliferation"/>
    <property type="evidence" value="ECO:0007669"/>
    <property type="project" value="Ensembl"/>
</dbReference>
<dbReference type="GO" id="GO:0042981">
    <property type="term" value="P:regulation of apoptotic process"/>
    <property type="evidence" value="ECO:0000250"/>
    <property type="project" value="UniProtKB"/>
</dbReference>
<dbReference type="GO" id="GO:0010506">
    <property type="term" value="P:regulation of autophagy"/>
    <property type="evidence" value="ECO:0000250"/>
    <property type="project" value="UniProtKB"/>
</dbReference>
<dbReference type="GO" id="GO:0060049">
    <property type="term" value="P:regulation of protein glycosylation"/>
    <property type="evidence" value="ECO:0007669"/>
    <property type="project" value="Ensembl"/>
</dbReference>
<dbReference type="GO" id="GO:0032526">
    <property type="term" value="P:response to retinoic acid"/>
    <property type="evidence" value="ECO:0007669"/>
    <property type="project" value="Ensembl"/>
</dbReference>
<dbReference type="GO" id="GO:0046512">
    <property type="term" value="P:sphingosine biosynthetic process"/>
    <property type="evidence" value="ECO:0000315"/>
    <property type="project" value="UniProtKB"/>
</dbReference>
<dbReference type="InterPro" id="IPR008901">
    <property type="entry name" value="ACER"/>
</dbReference>
<dbReference type="PANTHER" id="PTHR46139">
    <property type="entry name" value="ALKALINE CERAMIDASE"/>
    <property type="match status" value="1"/>
</dbReference>
<dbReference type="PANTHER" id="PTHR46139:SF1">
    <property type="entry name" value="ALKALINE CERAMIDASE 2"/>
    <property type="match status" value="1"/>
</dbReference>
<dbReference type="Pfam" id="PF05875">
    <property type="entry name" value="Ceramidase"/>
    <property type="match status" value="1"/>
</dbReference>
<sequence length="275" mass="31369">MGAPHWWDHLRAGSSEVDWCEDNYTIVPAIAEFYNTISNVLFFILPPICMCLFRQYATCFNSGIYLIWTLLVVVGIGSVYFHATLSFLGQMLDELAILWVLMCALAMWFPRRYLPKIFRNDRGRFKAVVCVLSAITTCLAFIKPAINNISLMILGLPCTALLVAELKRCDNVRVFKLGLFSGLWWTLALFCWISDQAFCELLSSFHFPYLHCVWHILICLASYLGCVCFAYFDAASEIPEQGPVIRFWPSEKWAFIGVPYVSLLCAHKKSPVKIT</sequence>
<accession>Q8VD53</accession>
<accession>Q6PB92</accession>
<accession>Q8BUG3</accession>
<feature type="chain" id="PRO_0000247749" description="Alkaline ceramidase 2">
    <location>
        <begin position="1"/>
        <end position="275"/>
    </location>
</feature>
<feature type="topological domain" description="Lumenal" evidence="3">
    <location>
        <begin position="1"/>
        <end position="32"/>
    </location>
</feature>
<feature type="transmembrane region" description="Helical" evidence="3">
    <location>
        <begin position="33"/>
        <end position="53"/>
    </location>
</feature>
<feature type="topological domain" description="Cytoplasmic" evidence="3">
    <location>
        <begin position="54"/>
        <end position="62"/>
    </location>
</feature>
<feature type="transmembrane region" description="Helical" evidence="3">
    <location>
        <begin position="63"/>
        <end position="83"/>
    </location>
</feature>
<feature type="topological domain" description="Lumenal" evidence="3">
    <location>
        <begin position="84"/>
        <end position="86"/>
    </location>
</feature>
<feature type="transmembrane region" description="Helical" evidence="3">
    <location>
        <begin position="87"/>
        <end position="107"/>
    </location>
</feature>
<feature type="topological domain" description="Cytoplasmic" evidence="3">
    <location>
        <begin position="108"/>
        <end position="124"/>
    </location>
</feature>
<feature type="transmembrane region" description="Helical" evidence="3">
    <location>
        <begin position="125"/>
        <end position="142"/>
    </location>
</feature>
<feature type="topological domain" description="Lumenal" evidence="3">
    <location>
        <position position="143"/>
    </location>
</feature>
<feature type="transmembrane region" description="Helical" evidence="3">
    <location>
        <begin position="144"/>
        <end position="164"/>
    </location>
</feature>
<feature type="topological domain" description="Cytoplasmic" evidence="3">
    <location>
        <begin position="165"/>
        <end position="173"/>
    </location>
</feature>
<feature type="transmembrane region" description="Helical" evidence="3">
    <location>
        <begin position="174"/>
        <end position="194"/>
    </location>
</feature>
<feature type="topological domain" description="Lumenal" evidence="3">
    <location>
        <begin position="195"/>
        <end position="211"/>
    </location>
</feature>
<feature type="transmembrane region" description="Helical" evidence="3">
    <location>
        <begin position="212"/>
        <end position="232"/>
    </location>
</feature>
<feature type="topological domain" description="Cytoplasmic" evidence="3">
    <location>
        <begin position="233"/>
        <end position="275"/>
    </location>
</feature>
<feature type="binding site" evidence="2">
    <location>
        <position position="18"/>
    </location>
    <ligand>
        <name>Ca(2+)</name>
        <dbReference type="ChEBI" id="CHEBI:29108"/>
    </ligand>
</feature>
<feature type="binding site" evidence="2">
    <location>
        <position position="19"/>
    </location>
    <ligand>
        <name>Ca(2+)</name>
        <dbReference type="ChEBI" id="CHEBI:29108"/>
    </ligand>
</feature>
<feature type="binding site" evidence="2">
    <location>
        <position position="21"/>
    </location>
    <ligand>
        <name>Ca(2+)</name>
        <dbReference type="ChEBI" id="CHEBI:29108"/>
    </ligand>
</feature>
<feature type="binding site" evidence="2">
    <location>
        <position position="23"/>
    </location>
    <ligand>
        <name>Ca(2+)</name>
        <dbReference type="ChEBI" id="CHEBI:29108"/>
    </ligand>
</feature>
<feature type="binding site" evidence="2">
    <location>
        <position position="32"/>
    </location>
    <ligand>
        <name>Ca(2+)</name>
        <dbReference type="ChEBI" id="CHEBI:29108"/>
    </ligand>
</feature>
<feature type="binding site" evidence="2">
    <location>
        <position position="82"/>
    </location>
    <ligand>
        <name>Zn(2+)</name>
        <dbReference type="ChEBI" id="CHEBI:29105"/>
        <note>catalytic</note>
    </ligand>
</feature>
<feature type="binding site" evidence="2">
    <location>
        <position position="211"/>
    </location>
    <ligand>
        <name>Zn(2+)</name>
        <dbReference type="ChEBI" id="CHEBI:29105"/>
        <note>catalytic</note>
    </ligand>
</feature>
<feature type="binding site" evidence="2">
    <location>
        <position position="215"/>
    </location>
    <ligand>
        <name>Zn(2+)</name>
        <dbReference type="ChEBI" id="CHEBI:29105"/>
        <note>catalytic</note>
    </ligand>
</feature>
<feature type="glycosylation site" description="N-linked (GlcNAc...) asparagine" evidence="3">
    <location>
        <position position="23"/>
    </location>
</feature>
<feature type="splice variant" id="VSP_020036" description="In isoform 2." evidence="5">
    <location>
        <begin position="122"/>
        <end position="167"/>
    </location>
</feature>
<reference key="1">
    <citation type="journal article" date="2001" name="Oncogene">
        <title>Expression profiling and identification of novel genes in hepatocellular carcinomas.</title>
        <authorList>
            <person name="Graveel C.R."/>
            <person name="Jatkoe T."/>
            <person name="Madore S.J."/>
            <person name="Holt A.L."/>
            <person name="Farnham P.J."/>
        </authorList>
    </citation>
    <scope>NUCLEOTIDE SEQUENCE [MRNA] (ISOFORM 1)</scope>
    <source>
        <tissue>Hepatoma</tissue>
    </source>
</reference>
<reference key="2">
    <citation type="journal article" date="2006" name="FASEB J.">
        <title>Golgi alkaline ceramidase regulates cell proliferation and survival by controlling levels of sphingosine and S1P.</title>
        <authorList>
            <person name="Xu R."/>
            <person name="Jin J."/>
            <person name="Hu W."/>
            <person name="Sun W."/>
            <person name="Bielawski J."/>
            <person name="Szulc Z."/>
            <person name="Taha T."/>
            <person name="Obeid L.M."/>
            <person name="Mao C."/>
        </authorList>
    </citation>
    <scope>NUCLEOTIDE SEQUENCE [MRNA] (ISOFORM 1)</scope>
</reference>
<reference key="3">
    <citation type="journal article" date="2004" name="Genome Res.">
        <title>The status, quality, and expansion of the NIH full-length cDNA project: the Mammalian Gene Collection (MGC).</title>
        <authorList>
            <consortium name="The MGC Project Team"/>
        </authorList>
    </citation>
    <scope>NUCLEOTIDE SEQUENCE [LARGE SCALE MRNA] (ISOFORM 2)</scope>
    <source>
        <strain>C57BL/6J</strain>
        <tissue>Brain</tissue>
    </source>
</reference>
<reference key="4">
    <citation type="journal article" date="2005" name="Science">
        <title>The transcriptional landscape of the mammalian genome.</title>
        <authorList>
            <person name="Carninci P."/>
            <person name="Kasukawa T."/>
            <person name="Katayama S."/>
            <person name="Gough J."/>
            <person name="Frith M.C."/>
            <person name="Maeda N."/>
            <person name="Oyama R."/>
            <person name="Ravasi T."/>
            <person name="Lenhard B."/>
            <person name="Wells C."/>
            <person name="Kodzius R."/>
            <person name="Shimokawa K."/>
            <person name="Bajic V.B."/>
            <person name="Brenner S.E."/>
            <person name="Batalov S."/>
            <person name="Forrest A.R."/>
            <person name="Zavolan M."/>
            <person name="Davis M.J."/>
            <person name="Wilming L.G."/>
            <person name="Aidinis V."/>
            <person name="Allen J.E."/>
            <person name="Ambesi-Impiombato A."/>
            <person name="Apweiler R."/>
            <person name="Aturaliya R.N."/>
            <person name="Bailey T.L."/>
            <person name="Bansal M."/>
            <person name="Baxter L."/>
            <person name="Beisel K.W."/>
            <person name="Bersano T."/>
            <person name="Bono H."/>
            <person name="Chalk A.M."/>
            <person name="Chiu K.P."/>
            <person name="Choudhary V."/>
            <person name="Christoffels A."/>
            <person name="Clutterbuck D.R."/>
            <person name="Crowe M.L."/>
            <person name="Dalla E."/>
            <person name="Dalrymple B.P."/>
            <person name="de Bono B."/>
            <person name="Della Gatta G."/>
            <person name="di Bernardo D."/>
            <person name="Down T."/>
            <person name="Engstrom P."/>
            <person name="Fagiolini M."/>
            <person name="Faulkner G."/>
            <person name="Fletcher C.F."/>
            <person name="Fukushima T."/>
            <person name="Furuno M."/>
            <person name="Futaki S."/>
            <person name="Gariboldi M."/>
            <person name="Georgii-Hemming P."/>
            <person name="Gingeras T.R."/>
            <person name="Gojobori T."/>
            <person name="Green R.E."/>
            <person name="Gustincich S."/>
            <person name="Harbers M."/>
            <person name="Hayashi Y."/>
            <person name="Hensch T.K."/>
            <person name="Hirokawa N."/>
            <person name="Hill D."/>
            <person name="Huminiecki L."/>
            <person name="Iacono M."/>
            <person name="Ikeo K."/>
            <person name="Iwama A."/>
            <person name="Ishikawa T."/>
            <person name="Jakt M."/>
            <person name="Kanapin A."/>
            <person name="Katoh M."/>
            <person name="Kawasawa Y."/>
            <person name="Kelso J."/>
            <person name="Kitamura H."/>
            <person name="Kitano H."/>
            <person name="Kollias G."/>
            <person name="Krishnan S.P."/>
            <person name="Kruger A."/>
            <person name="Kummerfeld S.K."/>
            <person name="Kurochkin I.V."/>
            <person name="Lareau L.F."/>
            <person name="Lazarevic D."/>
            <person name="Lipovich L."/>
            <person name="Liu J."/>
            <person name="Liuni S."/>
            <person name="McWilliam S."/>
            <person name="Madan Babu M."/>
            <person name="Madera M."/>
            <person name="Marchionni L."/>
            <person name="Matsuda H."/>
            <person name="Matsuzawa S."/>
            <person name="Miki H."/>
            <person name="Mignone F."/>
            <person name="Miyake S."/>
            <person name="Morris K."/>
            <person name="Mottagui-Tabar S."/>
            <person name="Mulder N."/>
            <person name="Nakano N."/>
            <person name="Nakauchi H."/>
            <person name="Ng P."/>
            <person name="Nilsson R."/>
            <person name="Nishiguchi S."/>
            <person name="Nishikawa S."/>
            <person name="Nori F."/>
            <person name="Ohara O."/>
            <person name="Okazaki Y."/>
            <person name="Orlando V."/>
            <person name="Pang K.C."/>
            <person name="Pavan W.J."/>
            <person name="Pavesi G."/>
            <person name="Pesole G."/>
            <person name="Petrovsky N."/>
            <person name="Piazza S."/>
            <person name="Reed J."/>
            <person name="Reid J.F."/>
            <person name="Ring B.Z."/>
            <person name="Ringwald M."/>
            <person name="Rost B."/>
            <person name="Ruan Y."/>
            <person name="Salzberg S.L."/>
            <person name="Sandelin A."/>
            <person name="Schneider C."/>
            <person name="Schoenbach C."/>
            <person name="Sekiguchi K."/>
            <person name="Semple C.A."/>
            <person name="Seno S."/>
            <person name="Sessa L."/>
            <person name="Sheng Y."/>
            <person name="Shibata Y."/>
            <person name="Shimada H."/>
            <person name="Shimada K."/>
            <person name="Silva D."/>
            <person name="Sinclair B."/>
            <person name="Sperling S."/>
            <person name="Stupka E."/>
            <person name="Sugiura K."/>
            <person name="Sultana R."/>
            <person name="Takenaka Y."/>
            <person name="Taki K."/>
            <person name="Tammoja K."/>
            <person name="Tan S.L."/>
            <person name="Tang S."/>
            <person name="Taylor M.S."/>
            <person name="Tegner J."/>
            <person name="Teichmann S.A."/>
            <person name="Ueda H.R."/>
            <person name="van Nimwegen E."/>
            <person name="Verardo R."/>
            <person name="Wei C.L."/>
            <person name="Yagi K."/>
            <person name="Yamanishi H."/>
            <person name="Zabarovsky E."/>
            <person name="Zhu S."/>
            <person name="Zimmer A."/>
            <person name="Hide W."/>
            <person name="Bult C."/>
            <person name="Grimmond S.M."/>
            <person name="Teasdale R.D."/>
            <person name="Liu E.T."/>
            <person name="Brusic V."/>
            <person name="Quackenbush J."/>
            <person name="Wahlestedt C."/>
            <person name="Mattick J.S."/>
            <person name="Hume D.A."/>
            <person name="Kai C."/>
            <person name="Sasaki D."/>
            <person name="Tomaru Y."/>
            <person name="Fukuda S."/>
            <person name="Kanamori-Katayama M."/>
            <person name="Suzuki M."/>
            <person name="Aoki J."/>
            <person name="Arakawa T."/>
            <person name="Iida J."/>
            <person name="Imamura K."/>
            <person name="Itoh M."/>
            <person name="Kato T."/>
            <person name="Kawaji H."/>
            <person name="Kawagashira N."/>
            <person name="Kawashima T."/>
            <person name="Kojima M."/>
            <person name="Kondo S."/>
            <person name="Konno H."/>
            <person name="Nakano K."/>
            <person name="Ninomiya N."/>
            <person name="Nishio T."/>
            <person name="Okada M."/>
            <person name="Plessy C."/>
            <person name="Shibata K."/>
            <person name="Shiraki T."/>
            <person name="Suzuki S."/>
            <person name="Tagami M."/>
            <person name="Waki K."/>
            <person name="Watahiki A."/>
            <person name="Okamura-Oho Y."/>
            <person name="Suzuki H."/>
            <person name="Kawai J."/>
            <person name="Hayashizaki Y."/>
        </authorList>
    </citation>
    <scope>NUCLEOTIDE SEQUENCE [LARGE SCALE MRNA] OF 1-215</scope>
    <source>
        <strain>C57BL/6J</strain>
        <tissue>Kidney</tissue>
    </source>
</reference>
<reference key="5">
    <citation type="journal article" date="2018" name="FASEB J.">
        <title>Alkaline ceramidase 2 is essential for the homeostasis of plasma sphingoid bases and their phosphates.</title>
        <authorList>
            <person name="Li F."/>
            <person name="Xu R."/>
            <person name="Low B.E."/>
            <person name="Lin C.L."/>
            <person name="Garcia-Barros M."/>
            <person name="Schrandt J."/>
            <person name="Mileva I."/>
            <person name="Snider A."/>
            <person name="Luo C.K."/>
            <person name="Jiang X.C."/>
            <person name="Li M.S."/>
            <person name="Hannun Y.A."/>
            <person name="Obeid L.M."/>
            <person name="Wiles M.V."/>
            <person name="Mao C."/>
        </authorList>
    </citation>
    <scope>FUNCTION</scope>
    <scope>CATALYTIC ACTIVITY</scope>
    <scope>PATHWAY</scope>
    <scope>TISSUE SPECIFICITY</scope>
    <scope>DISRUPTION PHENOTYPE</scope>
</reference>